<accession>Q96RY5</accession>
<accession>A8MZL1</accession>
<accession>B1AJY1</accession>
<accession>Q8NDN1</accession>
<accession>Q9P2C1</accession>
<feature type="chain" id="PRO_0000264471" description="Protein cramped-like">
    <location>
        <begin position="1"/>
        <end position="1269"/>
    </location>
</feature>
<feature type="domain" description="SANT" evidence="1">
    <location>
        <begin position="161"/>
        <end position="224"/>
    </location>
</feature>
<feature type="region of interest" description="Disordered" evidence="2">
    <location>
        <begin position="1"/>
        <end position="165"/>
    </location>
</feature>
<feature type="region of interest" description="Disordered" evidence="2">
    <location>
        <begin position="450"/>
        <end position="541"/>
    </location>
</feature>
<feature type="region of interest" description="Disordered" evidence="2">
    <location>
        <begin position="581"/>
        <end position="666"/>
    </location>
</feature>
<feature type="region of interest" description="Disordered" evidence="2">
    <location>
        <begin position="757"/>
        <end position="827"/>
    </location>
</feature>
<feature type="region of interest" description="Disordered" evidence="2">
    <location>
        <begin position="976"/>
        <end position="1034"/>
    </location>
</feature>
<feature type="region of interest" description="Disordered" evidence="2">
    <location>
        <begin position="1055"/>
        <end position="1092"/>
    </location>
</feature>
<feature type="region of interest" description="Disordered" evidence="2">
    <location>
        <begin position="1115"/>
        <end position="1157"/>
    </location>
</feature>
<feature type="compositionally biased region" description="Gly residues" evidence="2">
    <location>
        <begin position="1"/>
        <end position="12"/>
    </location>
</feature>
<feature type="compositionally biased region" description="Basic and acidic residues" evidence="2">
    <location>
        <begin position="13"/>
        <end position="24"/>
    </location>
</feature>
<feature type="compositionally biased region" description="Basic and acidic residues" evidence="2">
    <location>
        <begin position="43"/>
        <end position="52"/>
    </location>
</feature>
<feature type="compositionally biased region" description="Pro residues" evidence="2">
    <location>
        <begin position="59"/>
        <end position="74"/>
    </location>
</feature>
<feature type="compositionally biased region" description="Gly residues" evidence="2">
    <location>
        <begin position="105"/>
        <end position="123"/>
    </location>
</feature>
<feature type="compositionally biased region" description="Low complexity" evidence="2">
    <location>
        <begin position="124"/>
        <end position="147"/>
    </location>
</feature>
<feature type="compositionally biased region" description="Basic and acidic residues" evidence="2">
    <location>
        <begin position="151"/>
        <end position="165"/>
    </location>
</feature>
<feature type="compositionally biased region" description="Low complexity" evidence="2">
    <location>
        <begin position="485"/>
        <end position="507"/>
    </location>
</feature>
<feature type="compositionally biased region" description="Basic and acidic residues" evidence="2">
    <location>
        <begin position="508"/>
        <end position="518"/>
    </location>
</feature>
<feature type="compositionally biased region" description="Basic and acidic residues" evidence="2">
    <location>
        <begin position="526"/>
        <end position="535"/>
    </location>
</feature>
<feature type="compositionally biased region" description="Polar residues" evidence="2">
    <location>
        <begin position="757"/>
        <end position="767"/>
    </location>
</feature>
<feature type="compositionally biased region" description="Polar residues" evidence="2">
    <location>
        <begin position="774"/>
        <end position="806"/>
    </location>
</feature>
<feature type="compositionally biased region" description="Polar residues" evidence="2">
    <location>
        <begin position="982"/>
        <end position="1002"/>
    </location>
</feature>
<feature type="compositionally biased region" description="Low complexity" evidence="2">
    <location>
        <begin position="1055"/>
        <end position="1070"/>
    </location>
</feature>
<feature type="compositionally biased region" description="Low complexity" evidence="2">
    <location>
        <begin position="1125"/>
        <end position="1140"/>
    </location>
</feature>
<feature type="modified residue" description="Phosphoserine" evidence="7">
    <location>
        <position position="307"/>
    </location>
</feature>
<feature type="modified residue" description="Phosphoserine" evidence="5 6">
    <location>
        <position position="1268"/>
    </location>
</feature>
<feature type="sequence conflict" description="In Ref. 4; BAA92664." evidence="3" ref="4">
    <original>G</original>
    <variation>D</variation>
    <location>
        <position position="246"/>
    </location>
</feature>
<feature type="sequence conflict" description="In Ref. 4; BAA92664." evidence="3" ref="4">
    <original>L</original>
    <variation>S</variation>
    <location>
        <position position="503"/>
    </location>
</feature>
<reference key="1">
    <citation type="journal article" date="2001" name="Hum. Mol. Genet.">
        <title>Sequence, structure and pathology of the fully annotated terminal 2 Mb of the short arm of human chromosome 16.</title>
        <authorList>
            <person name="Daniels R.J."/>
            <person name="Peden J.F."/>
            <person name="Lloyd C."/>
            <person name="Horsley S.W."/>
            <person name="Clark K."/>
            <person name="Tufarelli C."/>
            <person name="Kearney L."/>
            <person name="Buckle V.J."/>
            <person name="Doggett N.A."/>
            <person name="Flint J."/>
            <person name="Higgs D.R."/>
        </authorList>
    </citation>
    <scope>NUCLEOTIDE SEQUENCE [LARGE SCALE GENOMIC DNA]</scope>
</reference>
<reference key="2">
    <citation type="journal article" date="2004" name="Nature">
        <title>The sequence and analysis of duplication-rich human chromosome 16.</title>
        <authorList>
            <person name="Martin J."/>
            <person name="Han C."/>
            <person name="Gordon L.A."/>
            <person name="Terry A."/>
            <person name="Prabhakar S."/>
            <person name="She X."/>
            <person name="Xie G."/>
            <person name="Hellsten U."/>
            <person name="Chan Y.M."/>
            <person name="Altherr M."/>
            <person name="Couronne O."/>
            <person name="Aerts A."/>
            <person name="Bajorek E."/>
            <person name="Black S."/>
            <person name="Blumer H."/>
            <person name="Branscomb E."/>
            <person name="Brown N.C."/>
            <person name="Bruno W.J."/>
            <person name="Buckingham J.M."/>
            <person name="Callen D.F."/>
            <person name="Campbell C.S."/>
            <person name="Campbell M.L."/>
            <person name="Campbell E.W."/>
            <person name="Caoile C."/>
            <person name="Challacombe J.F."/>
            <person name="Chasteen L.A."/>
            <person name="Chertkov O."/>
            <person name="Chi H.C."/>
            <person name="Christensen M."/>
            <person name="Clark L.M."/>
            <person name="Cohn J.D."/>
            <person name="Denys M."/>
            <person name="Detter J.C."/>
            <person name="Dickson M."/>
            <person name="Dimitrijevic-Bussod M."/>
            <person name="Escobar J."/>
            <person name="Fawcett J.J."/>
            <person name="Flowers D."/>
            <person name="Fotopulos D."/>
            <person name="Glavina T."/>
            <person name="Gomez M."/>
            <person name="Gonzales E."/>
            <person name="Goodstein D."/>
            <person name="Goodwin L.A."/>
            <person name="Grady D.L."/>
            <person name="Grigoriev I."/>
            <person name="Groza M."/>
            <person name="Hammon N."/>
            <person name="Hawkins T."/>
            <person name="Haydu L."/>
            <person name="Hildebrand C.E."/>
            <person name="Huang W."/>
            <person name="Israni S."/>
            <person name="Jett J."/>
            <person name="Jewett P.B."/>
            <person name="Kadner K."/>
            <person name="Kimball H."/>
            <person name="Kobayashi A."/>
            <person name="Krawczyk M.-C."/>
            <person name="Leyba T."/>
            <person name="Longmire J.L."/>
            <person name="Lopez F."/>
            <person name="Lou Y."/>
            <person name="Lowry S."/>
            <person name="Ludeman T."/>
            <person name="Manohar C.F."/>
            <person name="Mark G.A."/>
            <person name="McMurray K.L."/>
            <person name="Meincke L.J."/>
            <person name="Morgan J."/>
            <person name="Moyzis R.K."/>
            <person name="Mundt M.O."/>
            <person name="Munk A.C."/>
            <person name="Nandkeshwar R.D."/>
            <person name="Pitluck S."/>
            <person name="Pollard M."/>
            <person name="Predki P."/>
            <person name="Parson-Quintana B."/>
            <person name="Ramirez L."/>
            <person name="Rash S."/>
            <person name="Retterer J."/>
            <person name="Ricke D.O."/>
            <person name="Robinson D.L."/>
            <person name="Rodriguez A."/>
            <person name="Salamov A."/>
            <person name="Saunders E.H."/>
            <person name="Scott D."/>
            <person name="Shough T."/>
            <person name="Stallings R.L."/>
            <person name="Stalvey M."/>
            <person name="Sutherland R.D."/>
            <person name="Tapia R."/>
            <person name="Tesmer J.G."/>
            <person name="Thayer N."/>
            <person name="Thompson L.S."/>
            <person name="Tice H."/>
            <person name="Torney D.C."/>
            <person name="Tran-Gyamfi M."/>
            <person name="Tsai M."/>
            <person name="Ulanovsky L.E."/>
            <person name="Ustaszewska A."/>
            <person name="Vo N."/>
            <person name="White P.S."/>
            <person name="Williams A.L."/>
            <person name="Wills P.L."/>
            <person name="Wu J.-R."/>
            <person name="Wu K."/>
            <person name="Yang J."/>
            <person name="DeJong P."/>
            <person name="Bruce D."/>
            <person name="Doggett N.A."/>
            <person name="Deaven L."/>
            <person name="Schmutz J."/>
            <person name="Grimwood J."/>
            <person name="Richardson P."/>
            <person name="Rokhsar D.S."/>
            <person name="Eichler E.E."/>
            <person name="Gilna P."/>
            <person name="Lucas S.M."/>
            <person name="Myers R.M."/>
            <person name="Rubin E.M."/>
            <person name="Pennacchio L.A."/>
        </authorList>
    </citation>
    <scope>NUCLEOTIDE SEQUENCE [LARGE SCALE GENOMIC DNA]</scope>
</reference>
<reference key="3">
    <citation type="journal article" date="2007" name="BMC Genomics">
        <title>The full-ORF clone resource of the German cDNA consortium.</title>
        <authorList>
            <person name="Bechtel S."/>
            <person name="Rosenfelder H."/>
            <person name="Duda A."/>
            <person name="Schmidt C.P."/>
            <person name="Ernst U."/>
            <person name="Wellenreuther R."/>
            <person name="Mehrle A."/>
            <person name="Schuster C."/>
            <person name="Bahr A."/>
            <person name="Bloecker H."/>
            <person name="Heubner D."/>
            <person name="Hoerlein A."/>
            <person name="Michel G."/>
            <person name="Wedler H."/>
            <person name="Koehrer K."/>
            <person name="Ottenwaelder B."/>
            <person name="Poustka A."/>
            <person name="Wiemann S."/>
            <person name="Schupp I."/>
        </authorList>
    </citation>
    <scope>NUCLEOTIDE SEQUENCE [LARGE SCALE MRNA] OF 197-1269</scope>
    <source>
        <tissue>Testis</tissue>
    </source>
</reference>
<reference key="4">
    <citation type="journal article" date="2000" name="DNA Res.">
        <title>Prediction of the coding sequences of unidentified human genes. XVI. The complete sequences of 150 new cDNA clones from brain which code for large proteins in vitro.</title>
        <authorList>
            <person name="Nagase T."/>
            <person name="Kikuno R."/>
            <person name="Ishikawa K."/>
            <person name="Hirosawa M."/>
            <person name="Ohara O."/>
        </authorList>
    </citation>
    <scope>NUCLEOTIDE SEQUENCE [LARGE SCALE MRNA] OF 204-1269</scope>
    <source>
        <tissue>Brain</tissue>
    </source>
</reference>
<reference key="5">
    <citation type="journal article" date="2008" name="J. Proteome Res.">
        <title>Combining protein-based IMAC, peptide-based IMAC, and MudPIT for efficient phosphoproteomic analysis.</title>
        <authorList>
            <person name="Cantin G.T."/>
            <person name="Yi W."/>
            <person name="Lu B."/>
            <person name="Park S.K."/>
            <person name="Xu T."/>
            <person name="Lee J.-D."/>
            <person name="Yates J.R. III"/>
        </authorList>
    </citation>
    <scope>IDENTIFICATION BY MASS SPECTROMETRY [LARGE SCALE ANALYSIS]</scope>
    <source>
        <tissue>Cervix carcinoma</tissue>
    </source>
</reference>
<reference key="6">
    <citation type="journal article" date="2008" name="Proc. Natl. Acad. Sci. U.S.A.">
        <title>A quantitative atlas of mitotic phosphorylation.</title>
        <authorList>
            <person name="Dephoure N."/>
            <person name="Zhou C."/>
            <person name="Villen J."/>
            <person name="Beausoleil S.A."/>
            <person name="Bakalarski C.E."/>
            <person name="Elledge S.J."/>
            <person name="Gygi S.P."/>
        </authorList>
    </citation>
    <scope>IDENTIFICATION BY MASS SPECTROMETRY [LARGE SCALE ANALYSIS]</scope>
    <source>
        <tissue>Cervix carcinoma</tissue>
    </source>
</reference>
<reference key="7">
    <citation type="journal article" date="2009" name="Sci. Signal.">
        <title>Quantitative phosphoproteomic analysis of T cell receptor signaling reveals system-wide modulation of protein-protein interactions.</title>
        <authorList>
            <person name="Mayya V."/>
            <person name="Lundgren D.H."/>
            <person name="Hwang S.-I."/>
            <person name="Rezaul K."/>
            <person name="Wu L."/>
            <person name="Eng J.K."/>
            <person name="Rodionov V."/>
            <person name="Han D.K."/>
        </authorList>
    </citation>
    <scope>PHOSPHORYLATION [LARGE SCALE ANALYSIS] AT SER-1268</scope>
    <scope>IDENTIFICATION BY MASS SPECTROMETRY [LARGE SCALE ANALYSIS]</scope>
    <source>
        <tissue>Leukemic T-cell</tissue>
    </source>
</reference>
<reference key="8">
    <citation type="journal article" date="2010" name="Sci. Signal.">
        <title>Quantitative phosphoproteomics reveals widespread full phosphorylation site occupancy during mitosis.</title>
        <authorList>
            <person name="Olsen J.V."/>
            <person name="Vermeulen M."/>
            <person name="Santamaria A."/>
            <person name="Kumar C."/>
            <person name="Miller M.L."/>
            <person name="Jensen L.J."/>
            <person name="Gnad F."/>
            <person name="Cox J."/>
            <person name="Jensen T.S."/>
            <person name="Nigg E.A."/>
            <person name="Brunak S."/>
            <person name="Mann M."/>
        </authorList>
    </citation>
    <scope>PHOSPHORYLATION [LARGE SCALE ANALYSIS] AT SER-1268</scope>
    <scope>IDENTIFICATION BY MASS SPECTROMETRY [LARGE SCALE ANALYSIS]</scope>
    <source>
        <tissue>Cervix carcinoma</tissue>
    </source>
</reference>
<reference key="9">
    <citation type="journal article" date="2013" name="J. Proteome Res.">
        <title>Toward a comprehensive characterization of a human cancer cell phosphoproteome.</title>
        <authorList>
            <person name="Zhou H."/>
            <person name="Di Palma S."/>
            <person name="Preisinger C."/>
            <person name="Peng M."/>
            <person name="Polat A.N."/>
            <person name="Heck A.J."/>
            <person name="Mohammed S."/>
        </authorList>
    </citation>
    <scope>PHOSPHORYLATION [LARGE SCALE ANALYSIS] AT SER-307</scope>
    <scope>IDENTIFICATION BY MASS SPECTROMETRY [LARGE SCALE ANALYSIS]</scope>
    <source>
        <tissue>Erythroleukemia</tissue>
    </source>
</reference>
<keyword id="KW-0238">DNA-binding</keyword>
<keyword id="KW-0539">Nucleus</keyword>
<keyword id="KW-0597">Phosphoprotein</keyword>
<keyword id="KW-1267">Proteomics identification</keyword>
<keyword id="KW-1185">Reference proteome</keyword>
<sequence length="1269" mass="134718">MTVKLGDGGSGEDGLKKLGKRAADEESLEGEGAGGADAAEESSGTKRDEKTPRAGADGPPAPPGAPQAPSPPQGSPQDQHHFLRSSVRPQSKRPRKDPPSAVGSGNAGGSGPRGKGAEGGGSSSGNVSGVAPAAPAGGSRSSSRNLGSSGGEKEEGKKVRRQWESWSTEDKNTFFEGLYEHGKDFEAIQNNIALKYKKKGKPASMVKNKEQVRHFYYRTWHKITKYIDFDHVFSRGLKKSSQELYGLICYGELRKKIGGCMDDKNATKLNELIQVGATTVRYKGRNLRIKAPMCRALKKLCDPDGLSDEEDQKPVRLPLKVPIELQPRNNHAWARVQSLAQNPRLRMIVELHRKVSSLIEFLKQKWALHEVRVRKTLEERQLQDSCSAPMQEKVTLHLFPGENCTLTPLPGVARVVHSKAFCTVHWQEGGRCKQSAKDAHVLPPAQILGIQSGQGTARGQVKCPRSGAEGKGVGRPPPAADALQSSGESSPESAPGEGAALSLSSPDAPDRPPPRHQDTGPCLEKTPAEGRDSPTREPGALPCACGQLPDLEDELSLLDPLPRYLKSCQDLIVPEQCRCADTRPGSEQPPLGGAASPEVLAPVSKEAADLAPTGPSPRPGPGLLLDVCTKDLADAPAEELQEKGSPAGPPPSQGQPAARPPKEVPASRLAQQLREEGWNLQTSESLTLAEVYLMMGKPSKLQLEYDWLGPGRQDPRPGSLPTALHKQRLLSCLLKLISTEVNPKLALEANTISTASVRPAQEEQSMTPPGKVVTVSSRSPRCPRNQASLRSSKTFPPSSAPCSSGLRNPPRPLLVPGPSSTGSNDSDGGLFAVPTTLPPNSRHGKLFSPSKEAELTFRQHLNSISMQSDFFLPKPRKLRNRHLRKPLVVQRTLLPRPSENQSHNVCSFSILSNSSVTGRGSFRPIQSSLTKAALSRPIVPKVLPPQATSHLASAIDLAATSAGILSGNPLPALDTEGLSGISPLSSDEVTGAISGQDSTGTHQDGDTLPTVGGSDPFVSIPSRPEQEPVADSFQGSSVLSLSELPKAPLQNGLSIPLSSSESSSTRLSPPDVSALLDISLPGPPEDALSQGEPATHISDSIIEIAISSGQYGEGVPLSPAKLNGSDSSKSLPSPSSSPQPHWIASPTHDPQWYPSDSTDSSLSSLFASFISPEKSRKMLPTPIGTNSGTSLLGPSLLDGNSRDSFVSRSLADVAEVVDSQLVCMMNENSIDYISRFNDLAQELSIAEPGRREALFDGGGGGPAVSDLSQ</sequence>
<name>CRML_HUMAN</name>
<comment type="subcellular location">
    <subcellularLocation>
        <location evidence="1">Nucleus</location>
    </subcellularLocation>
</comment>
<comment type="similarity">
    <text evidence="3">Belongs to the cramped family.</text>
</comment>
<comment type="sequence caution" evidence="3">
    <conflict type="erroneous gene model prediction">
        <sequence resource="EMBL-CDS" id="AAK61288"/>
    </conflict>
</comment>
<comment type="sequence caution" evidence="3">
    <conflict type="miscellaneous discrepancy">
        <sequence resource="EMBL-CDS" id="CAD38692"/>
    </conflict>
    <text>Probable cloning artifact.</text>
</comment>
<evidence type="ECO:0000255" key="1">
    <source>
        <dbReference type="PROSITE-ProRule" id="PRU00624"/>
    </source>
</evidence>
<evidence type="ECO:0000256" key="2">
    <source>
        <dbReference type="SAM" id="MobiDB-lite"/>
    </source>
</evidence>
<evidence type="ECO:0000305" key="3"/>
<evidence type="ECO:0000312" key="4">
    <source>
        <dbReference type="HGNC" id="HGNC:14122"/>
    </source>
</evidence>
<evidence type="ECO:0007744" key="5">
    <source>
    </source>
</evidence>
<evidence type="ECO:0007744" key="6">
    <source>
    </source>
</evidence>
<evidence type="ECO:0007744" key="7">
    <source>
    </source>
</evidence>
<gene>
    <name evidence="4" type="primary">CRAMP1</name>
    <name type="synonym">C16orf34</name>
    <name type="synonym">CRAMP1L</name>
    <name type="synonym">HN1L</name>
    <name type="synonym">KIAA1426</name>
</gene>
<organism>
    <name type="scientific">Homo sapiens</name>
    <name type="common">Human</name>
    <dbReference type="NCBI Taxonomy" id="9606"/>
    <lineage>
        <taxon>Eukaryota</taxon>
        <taxon>Metazoa</taxon>
        <taxon>Chordata</taxon>
        <taxon>Craniata</taxon>
        <taxon>Vertebrata</taxon>
        <taxon>Euteleostomi</taxon>
        <taxon>Mammalia</taxon>
        <taxon>Eutheria</taxon>
        <taxon>Euarchontoglires</taxon>
        <taxon>Primates</taxon>
        <taxon>Haplorrhini</taxon>
        <taxon>Catarrhini</taxon>
        <taxon>Hominidae</taxon>
        <taxon>Homo</taxon>
    </lineage>
</organism>
<dbReference type="EMBL" id="AE006639">
    <property type="protein sequence ID" value="AAK61288.1"/>
    <property type="status" value="ALT_SEQ"/>
    <property type="molecule type" value="Genomic_DNA"/>
</dbReference>
<dbReference type="EMBL" id="AL031009">
    <property type="status" value="NOT_ANNOTATED_CDS"/>
    <property type="molecule type" value="Genomic_DNA"/>
</dbReference>
<dbReference type="EMBL" id="AL031708">
    <property type="status" value="NOT_ANNOTATED_CDS"/>
    <property type="molecule type" value="Genomic_DNA"/>
</dbReference>
<dbReference type="EMBL" id="Z97652">
    <property type="status" value="NOT_ANNOTATED_CDS"/>
    <property type="molecule type" value="Genomic_DNA"/>
</dbReference>
<dbReference type="EMBL" id="AL833832">
    <property type="protein sequence ID" value="CAD38692.1"/>
    <property type="status" value="ALT_SEQ"/>
    <property type="molecule type" value="mRNA"/>
</dbReference>
<dbReference type="EMBL" id="AB037847">
    <property type="protein sequence ID" value="BAA92664.2"/>
    <property type="molecule type" value="mRNA"/>
</dbReference>
<dbReference type="CCDS" id="CCDS10440.2"/>
<dbReference type="RefSeq" id="NP_065876.3">
    <property type="nucleotide sequence ID" value="NM_020825.4"/>
</dbReference>
<dbReference type="BioGRID" id="121637">
    <property type="interactions" value="37"/>
</dbReference>
<dbReference type="FunCoup" id="Q96RY5">
    <property type="interactions" value="2916"/>
</dbReference>
<dbReference type="IntAct" id="Q96RY5">
    <property type="interactions" value="52"/>
</dbReference>
<dbReference type="MINT" id="Q96RY5"/>
<dbReference type="STRING" id="9606.ENSP00000380559"/>
<dbReference type="GlyGen" id="Q96RY5">
    <property type="glycosylation" value="1 site, 1 O-linked glycan (1 site)"/>
</dbReference>
<dbReference type="iPTMnet" id="Q96RY5"/>
<dbReference type="PhosphoSitePlus" id="Q96RY5"/>
<dbReference type="BioMuta" id="CRAMP1"/>
<dbReference type="DMDM" id="308153609"/>
<dbReference type="jPOST" id="Q96RY5"/>
<dbReference type="MassIVE" id="Q96RY5"/>
<dbReference type="PaxDb" id="9606-ENSP00000380559"/>
<dbReference type="PeptideAtlas" id="Q96RY5"/>
<dbReference type="ProteomicsDB" id="78048"/>
<dbReference type="Pumba" id="Q96RY5"/>
<dbReference type="Antibodypedia" id="49822">
    <property type="antibodies" value="25 antibodies from 8 providers"/>
</dbReference>
<dbReference type="DNASU" id="57585"/>
<dbReference type="Ensembl" id="ENST00000293925.9">
    <property type="protein sequence ID" value="ENSP00000293925.5"/>
    <property type="gene ID" value="ENSG00000007545.16"/>
</dbReference>
<dbReference type="Ensembl" id="ENST00000397412.8">
    <property type="protein sequence ID" value="ENSP00000380559.2"/>
    <property type="gene ID" value="ENSG00000007545.16"/>
</dbReference>
<dbReference type="GeneID" id="57585"/>
<dbReference type="KEGG" id="hsa:57585"/>
<dbReference type="MANE-Select" id="ENST00000397412.8">
    <property type="protein sequence ID" value="ENSP00000380559.2"/>
    <property type="RefSeq nucleotide sequence ID" value="NM_020825.4"/>
    <property type="RefSeq protein sequence ID" value="NP_065876.3"/>
</dbReference>
<dbReference type="UCSC" id="uc010uvh.3">
    <property type="organism name" value="human"/>
</dbReference>
<dbReference type="AGR" id="HGNC:14122"/>
<dbReference type="CTD" id="57585"/>
<dbReference type="DisGeNET" id="57585"/>
<dbReference type="GeneCards" id="CRAMP1"/>
<dbReference type="HGNC" id="HGNC:14122">
    <property type="gene designation" value="CRAMP1"/>
</dbReference>
<dbReference type="HPA" id="ENSG00000007545">
    <property type="expression patterns" value="Low tissue specificity"/>
</dbReference>
<dbReference type="neXtProt" id="NX_Q96RY5"/>
<dbReference type="OpenTargets" id="ENSG00000007545"/>
<dbReference type="PharmGKB" id="PA26861"/>
<dbReference type="VEuPathDB" id="HostDB:ENSG00000007545"/>
<dbReference type="eggNOG" id="KOG4468">
    <property type="taxonomic scope" value="Eukaryota"/>
</dbReference>
<dbReference type="GeneTree" id="ENSGT00390000003337"/>
<dbReference type="HOGENOM" id="CLU_003833_1_0_1"/>
<dbReference type="InParanoid" id="Q96RY5"/>
<dbReference type="OMA" id="YLMMGCP"/>
<dbReference type="OrthoDB" id="515799at2759"/>
<dbReference type="PAN-GO" id="Q96RY5">
    <property type="GO annotations" value="3 GO annotations based on evolutionary models"/>
</dbReference>
<dbReference type="PhylomeDB" id="Q96RY5"/>
<dbReference type="TreeFam" id="TF328521"/>
<dbReference type="PathwayCommons" id="Q96RY5"/>
<dbReference type="SignaLink" id="Q96RY5"/>
<dbReference type="BioGRID-ORCS" id="57585">
    <property type="hits" value="110 hits in 1158 CRISPR screens"/>
</dbReference>
<dbReference type="CD-CODE" id="DEE660B4">
    <property type="entry name" value="Stress granule"/>
</dbReference>
<dbReference type="ChiTaRS" id="CRAMP1">
    <property type="organism name" value="human"/>
</dbReference>
<dbReference type="GenomeRNAi" id="57585"/>
<dbReference type="Pharos" id="Q96RY5">
    <property type="development level" value="Tdark"/>
</dbReference>
<dbReference type="PRO" id="PR:Q96RY5"/>
<dbReference type="Proteomes" id="UP000005640">
    <property type="component" value="Chromosome 16"/>
</dbReference>
<dbReference type="RNAct" id="Q96RY5">
    <property type="molecule type" value="protein"/>
</dbReference>
<dbReference type="Bgee" id="ENSG00000007545">
    <property type="expression patterns" value="Expressed in thymus and 178 other cell types or tissues"/>
</dbReference>
<dbReference type="ExpressionAtlas" id="Q96RY5">
    <property type="expression patterns" value="baseline and differential"/>
</dbReference>
<dbReference type="GO" id="GO:0005634">
    <property type="term" value="C:nucleus"/>
    <property type="evidence" value="ECO:0000318"/>
    <property type="project" value="GO_Central"/>
</dbReference>
<dbReference type="GO" id="GO:0003682">
    <property type="term" value="F:chromatin binding"/>
    <property type="evidence" value="ECO:0000318"/>
    <property type="project" value="GO_Central"/>
</dbReference>
<dbReference type="GO" id="GO:0003677">
    <property type="term" value="F:DNA binding"/>
    <property type="evidence" value="ECO:0007669"/>
    <property type="project" value="UniProtKB-KW"/>
</dbReference>
<dbReference type="GO" id="GO:0007389">
    <property type="term" value="P:pattern specification process"/>
    <property type="evidence" value="ECO:0000318"/>
    <property type="project" value="GO_Central"/>
</dbReference>
<dbReference type="FunFam" id="1.10.10.60:FF:000439">
    <property type="entry name" value="Cramped chromatin regulator homolog 1"/>
    <property type="match status" value="1"/>
</dbReference>
<dbReference type="Gene3D" id="1.10.10.60">
    <property type="entry name" value="Homeodomain-like"/>
    <property type="match status" value="1"/>
</dbReference>
<dbReference type="InterPro" id="IPR055315">
    <property type="entry name" value="Cramped-like"/>
</dbReference>
<dbReference type="InterPro" id="IPR001005">
    <property type="entry name" value="SANT/Myb"/>
</dbReference>
<dbReference type="InterPro" id="IPR017884">
    <property type="entry name" value="SANT_dom"/>
</dbReference>
<dbReference type="PANTHER" id="PTHR21677">
    <property type="entry name" value="CRAMPED PROTEIN"/>
    <property type="match status" value="1"/>
</dbReference>
<dbReference type="PANTHER" id="PTHR21677:SF1">
    <property type="entry name" value="PROTEIN CRAMPED-LIKE"/>
    <property type="match status" value="1"/>
</dbReference>
<dbReference type="SMART" id="SM00717">
    <property type="entry name" value="SANT"/>
    <property type="match status" value="1"/>
</dbReference>
<dbReference type="PROSITE" id="PS51293">
    <property type="entry name" value="SANT"/>
    <property type="match status" value="1"/>
</dbReference>
<protein>
    <recommendedName>
        <fullName evidence="3">Protein cramped-like</fullName>
    </recommendedName>
    <alternativeName>
        <fullName evidence="4">Cramped chromatin regulator homolog 1</fullName>
    </alternativeName>
    <alternativeName>
        <fullName>Hematological and neurological expressed 1-like protein</fullName>
    </alternativeName>
</protein>
<proteinExistence type="evidence at protein level"/>